<keyword id="KW-0997">Cell inner membrane</keyword>
<keyword id="KW-1003">Cell membrane</keyword>
<keyword id="KW-0472">Membrane</keyword>
<keyword id="KW-0653">Protein transport</keyword>
<keyword id="KW-1185">Reference proteome</keyword>
<keyword id="KW-0811">Translocation</keyword>
<keyword id="KW-0812">Transmembrane</keyword>
<keyword id="KW-1133">Transmembrane helix</keyword>
<keyword id="KW-0813">Transport</keyword>
<dbReference type="EMBL" id="AE004439">
    <property type="protein sequence ID" value="AAK03773.1"/>
    <property type="molecule type" value="Genomic_DNA"/>
</dbReference>
<dbReference type="RefSeq" id="WP_005724565.1">
    <property type="nucleotide sequence ID" value="NC_002663.1"/>
</dbReference>
<dbReference type="SMR" id="Q9CKD3"/>
<dbReference type="STRING" id="272843.PM1689"/>
<dbReference type="EnsemblBacteria" id="AAK03773">
    <property type="protein sequence ID" value="AAK03773"/>
    <property type="gene ID" value="PM1689"/>
</dbReference>
<dbReference type="KEGG" id="pmu:PM1689"/>
<dbReference type="HOGENOM" id="CLU_086034_5_1_6"/>
<dbReference type="OrthoDB" id="7066617at2"/>
<dbReference type="Proteomes" id="UP000000809">
    <property type="component" value="Chromosome"/>
</dbReference>
<dbReference type="GO" id="GO:0033281">
    <property type="term" value="C:TAT protein transport complex"/>
    <property type="evidence" value="ECO:0007669"/>
    <property type="project" value="UniProtKB-UniRule"/>
</dbReference>
<dbReference type="GO" id="GO:0008320">
    <property type="term" value="F:protein transmembrane transporter activity"/>
    <property type="evidence" value="ECO:0007669"/>
    <property type="project" value="UniProtKB-UniRule"/>
</dbReference>
<dbReference type="GO" id="GO:0043953">
    <property type="term" value="P:protein transport by the Tat complex"/>
    <property type="evidence" value="ECO:0007669"/>
    <property type="project" value="UniProtKB-UniRule"/>
</dbReference>
<dbReference type="FunFam" id="1.20.5.3310:FF:000001">
    <property type="entry name" value="Probable Sec-independent protein translocase protein TatE"/>
    <property type="match status" value="1"/>
</dbReference>
<dbReference type="Gene3D" id="1.20.5.3310">
    <property type="match status" value="1"/>
</dbReference>
<dbReference type="HAMAP" id="MF_00236">
    <property type="entry name" value="TatA_E"/>
    <property type="match status" value="1"/>
</dbReference>
<dbReference type="InterPro" id="IPR003369">
    <property type="entry name" value="TatA/B/E"/>
</dbReference>
<dbReference type="InterPro" id="IPR006312">
    <property type="entry name" value="TatA/E"/>
</dbReference>
<dbReference type="NCBIfam" id="NF002500">
    <property type="entry name" value="PRK01833.1"/>
    <property type="match status" value="1"/>
</dbReference>
<dbReference type="NCBIfam" id="TIGR01411">
    <property type="entry name" value="tatAE"/>
    <property type="match status" value="1"/>
</dbReference>
<dbReference type="PANTHER" id="PTHR42982">
    <property type="entry name" value="SEC-INDEPENDENT PROTEIN TRANSLOCASE PROTEIN TATA"/>
    <property type="match status" value="1"/>
</dbReference>
<dbReference type="PANTHER" id="PTHR42982:SF1">
    <property type="entry name" value="SEC-INDEPENDENT PROTEIN TRANSLOCASE PROTEIN TATA"/>
    <property type="match status" value="1"/>
</dbReference>
<dbReference type="Pfam" id="PF02416">
    <property type="entry name" value="TatA_B_E"/>
    <property type="match status" value="1"/>
</dbReference>
<proteinExistence type="inferred from homology"/>
<protein>
    <recommendedName>
        <fullName evidence="1">Sec-independent protein translocase protein TatA</fullName>
    </recommendedName>
</protein>
<evidence type="ECO:0000255" key="1">
    <source>
        <dbReference type="HAMAP-Rule" id="MF_00236"/>
    </source>
</evidence>
<evidence type="ECO:0000256" key="2">
    <source>
        <dbReference type="SAM" id="MobiDB-lite"/>
    </source>
</evidence>
<sequence length="76" mass="8203">MGGISITQLLIIVAIVVLLFGTKKLRTLGSDLGESVKGFKKAMADDNKEKDAEFKSLSDDSETTAKTEKAKDKEQA</sequence>
<gene>
    <name evidence="1" type="primary">tatA</name>
    <name type="ordered locus">PM1689</name>
</gene>
<comment type="function">
    <text evidence="1">Part of the twin-arginine translocation (Tat) system that transports large folded proteins containing a characteristic twin-arginine motif in their signal peptide across membranes. TatA could form the protein-conducting channel of the Tat system.</text>
</comment>
<comment type="subunit">
    <text evidence="1">The Tat system comprises two distinct complexes: a TatABC complex, containing multiple copies of TatA, TatB and TatC subunits, and a separate TatA complex, containing only TatA subunits. Substrates initially bind to the TatABC complex, which probably triggers association of the separate TatA complex to form the active translocon.</text>
</comment>
<comment type="subcellular location">
    <subcellularLocation>
        <location evidence="1">Cell inner membrane</location>
        <topology evidence="1">Single-pass membrane protein</topology>
    </subcellularLocation>
</comment>
<comment type="similarity">
    <text evidence="1">Belongs to the TatA/E family.</text>
</comment>
<reference key="1">
    <citation type="journal article" date="2001" name="Proc. Natl. Acad. Sci. U.S.A.">
        <title>Complete genomic sequence of Pasteurella multocida Pm70.</title>
        <authorList>
            <person name="May B.J."/>
            <person name="Zhang Q."/>
            <person name="Li L.L."/>
            <person name="Paustian M.L."/>
            <person name="Whittam T.S."/>
            <person name="Kapur V."/>
        </authorList>
    </citation>
    <scope>NUCLEOTIDE SEQUENCE [LARGE SCALE GENOMIC DNA]</scope>
    <source>
        <strain>Pm70</strain>
    </source>
</reference>
<accession>Q9CKD3</accession>
<organism>
    <name type="scientific">Pasteurella multocida (strain Pm70)</name>
    <dbReference type="NCBI Taxonomy" id="272843"/>
    <lineage>
        <taxon>Bacteria</taxon>
        <taxon>Pseudomonadati</taxon>
        <taxon>Pseudomonadota</taxon>
        <taxon>Gammaproteobacteria</taxon>
        <taxon>Pasteurellales</taxon>
        <taxon>Pasteurellaceae</taxon>
        <taxon>Pasteurella</taxon>
    </lineage>
</organism>
<feature type="chain" id="PRO_0000097949" description="Sec-independent protein translocase protein TatA">
    <location>
        <begin position="1"/>
        <end position="76"/>
    </location>
</feature>
<feature type="transmembrane region" description="Helical" evidence="1">
    <location>
        <begin position="1"/>
        <end position="21"/>
    </location>
</feature>
<feature type="region of interest" description="Disordered" evidence="2">
    <location>
        <begin position="45"/>
        <end position="76"/>
    </location>
</feature>
<name>TATA_PASMU</name>